<feature type="chain" id="PRO_0000454671" description="Hydroxymethylglutaryl-CoA synthase ERG13">
    <location>
        <begin position="1"/>
        <end position="456"/>
    </location>
</feature>
<feature type="active site" description="Proton donor/acceptor" evidence="3">
    <location>
        <position position="86"/>
    </location>
</feature>
<feature type="active site" description="Acyl-thioester intermediate" evidence="3">
    <location>
        <position position="118"/>
    </location>
</feature>
<feature type="active site" description="Proton donor/acceptor" evidence="3">
    <location>
        <position position="259"/>
    </location>
</feature>
<feature type="binding site" evidence="2">
    <location>
        <position position="35"/>
    </location>
    <ligand>
        <name>(3S)-3-hydroxy-3-methylglutaryl-CoA</name>
        <dbReference type="ChEBI" id="CHEBI:43074"/>
    </ligand>
</feature>
<feature type="binding site" evidence="2">
    <location>
        <position position="118"/>
    </location>
    <ligand>
        <name>(3S)-3-hydroxy-3-methylglutaryl-CoA</name>
        <dbReference type="ChEBI" id="CHEBI:43074"/>
    </ligand>
</feature>
<feature type="binding site" evidence="2">
    <location>
        <position position="156"/>
    </location>
    <ligand>
        <name>(3S)-3-hydroxy-3-methylglutaryl-CoA</name>
        <dbReference type="ChEBI" id="CHEBI:43074"/>
    </ligand>
</feature>
<feature type="binding site" evidence="2">
    <location>
        <position position="160"/>
    </location>
    <ligand>
        <name>(3S)-3-hydroxy-3-methylglutaryl-CoA</name>
        <dbReference type="ChEBI" id="CHEBI:43074"/>
    </ligand>
</feature>
<feature type="binding site" evidence="2">
    <location>
        <position position="210"/>
    </location>
    <ligand>
        <name>(3S)-3-hydroxy-3-methylglutaryl-CoA</name>
        <dbReference type="ChEBI" id="CHEBI:43074"/>
    </ligand>
</feature>
<feature type="binding site" evidence="2">
    <location>
        <position position="259"/>
    </location>
    <ligand>
        <name>(3S)-3-hydroxy-3-methylglutaryl-CoA</name>
        <dbReference type="ChEBI" id="CHEBI:43074"/>
    </ligand>
</feature>
<feature type="binding site" evidence="2">
    <location>
        <position position="268"/>
    </location>
    <ligand>
        <name>(3S)-3-hydroxy-3-methylglutaryl-CoA</name>
        <dbReference type="ChEBI" id="CHEBI:43074"/>
    </ligand>
</feature>
<feature type="binding site" evidence="2">
    <location>
        <position position="336"/>
    </location>
    <ligand>
        <name>(3S)-3-hydroxy-3-methylglutaryl-CoA</name>
        <dbReference type="ChEBI" id="CHEBI:43074"/>
    </ligand>
</feature>
<feature type="binding site" evidence="2">
    <location>
        <position position="370"/>
    </location>
    <ligand>
        <name>(3S)-3-hydroxy-3-methylglutaryl-CoA</name>
        <dbReference type="ChEBI" id="CHEBI:43074"/>
    </ligand>
</feature>
<dbReference type="EC" id="2.3.3.10" evidence="7"/>
<dbReference type="EMBL" id="HG970335">
    <property type="protein sequence ID" value="CEF82946.1"/>
    <property type="molecule type" value="Genomic_DNA"/>
</dbReference>
<dbReference type="RefSeq" id="XP_011328502.1">
    <property type="nucleotide sequence ID" value="XM_011330200.1"/>
</dbReference>
<dbReference type="SMR" id="I1RY35"/>
<dbReference type="FunCoup" id="I1RY35">
    <property type="interactions" value="678"/>
</dbReference>
<dbReference type="STRING" id="229533.I1RY35"/>
<dbReference type="KEGG" id="fgr:FGSG_09266"/>
<dbReference type="VEuPathDB" id="FungiDB:FGRAMPH1_01G27519"/>
<dbReference type="eggNOG" id="KOG1393">
    <property type="taxonomic scope" value="Eukaryota"/>
</dbReference>
<dbReference type="HOGENOM" id="CLU_008065_0_1_1"/>
<dbReference type="InParanoid" id="I1RY35"/>
<dbReference type="OrthoDB" id="17345at110618"/>
<dbReference type="UniPathway" id="UPA00058">
    <property type="reaction ID" value="UER00102"/>
</dbReference>
<dbReference type="Proteomes" id="UP000070720">
    <property type="component" value="Chromosome 4"/>
</dbReference>
<dbReference type="GO" id="GO:0004421">
    <property type="term" value="F:hydroxymethylglutaryl-CoA synthase activity"/>
    <property type="evidence" value="ECO:0007669"/>
    <property type="project" value="UniProtKB-EC"/>
</dbReference>
<dbReference type="GO" id="GO:0006084">
    <property type="term" value="P:acetyl-CoA metabolic process"/>
    <property type="evidence" value="ECO:0007669"/>
    <property type="project" value="InterPro"/>
</dbReference>
<dbReference type="GO" id="GO:0006696">
    <property type="term" value="P:ergosterol biosynthetic process"/>
    <property type="evidence" value="ECO:0007669"/>
    <property type="project" value="TreeGrafter"/>
</dbReference>
<dbReference type="GO" id="GO:0010142">
    <property type="term" value="P:farnesyl diphosphate biosynthetic process, mevalonate pathway"/>
    <property type="evidence" value="ECO:0007669"/>
    <property type="project" value="InterPro"/>
</dbReference>
<dbReference type="CDD" id="cd00827">
    <property type="entry name" value="init_cond_enzymes"/>
    <property type="match status" value="1"/>
</dbReference>
<dbReference type="FunFam" id="3.40.47.10:FF:000008">
    <property type="entry name" value="3-hydroxy-3-methylglutaryl coenzyme A synthase"/>
    <property type="match status" value="1"/>
</dbReference>
<dbReference type="Gene3D" id="3.40.47.10">
    <property type="match status" value="1"/>
</dbReference>
<dbReference type="InterPro" id="IPR000590">
    <property type="entry name" value="HMG_CoA_synt_AS"/>
</dbReference>
<dbReference type="InterPro" id="IPR013746">
    <property type="entry name" value="HMG_CoA_synt_C_dom"/>
</dbReference>
<dbReference type="InterPro" id="IPR013528">
    <property type="entry name" value="HMG_CoA_synth_N"/>
</dbReference>
<dbReference type="InterPro" id="IPR010122">
    <property type="entry name" value="HMG_CoA_synthase_euk"/>
</dbReference>
<dbReference type="InterPro" id="IPR016039">
    <property type="entry name" value="Thiolase-like"/>
</dbReference>
<dbReference type="NCBIfam" id="TIGR01833">
    <property type="entry name" value="HMG-CoA-S_euk"/>
    <property type="match status" value="1"/>
</dbReference>
<dbReference type="PANTHER" id="PTHR43323">
    <property type="entry name" value="3-HYDROXY-3-METHYLGLUTARYL COENZYME A SYNTHASE"/>
    <property type="match status" value="1"/>
</dbReference>
<dbReference type="PANTHER" id="PTHR43323:SF2">
    <property type="entry name" value="HYDROXYMETHYLGLUTARYL-COA SYNTHASE"/>
    <property type="match status" value="1"/>
</dbReference>
<dbReference type="Pfam" id="PF08540">
    <property type="entry name" value="HMG_CoA_synt_C"/>
    <property type="match status" value="1"/>
</dbReference>
<dbReference type="Pfam" id="PF01154">
    <property type="entry name" value="HMG_CoA_synt_N"/>
    <property type="match status" value="1"/>
</dbReference>
<dbReference type="SUPFAM" id="SSF53901">
    <property type="entry name" value="Thiolase-like"/>
    <property type="match status" value="2"/>
</dbReference>
<dbReference type="PROSITE" id="PS01226">
    <property type="entry name" value="HMG_COA_SYNTHASE"/>
    <property type="match status" value="1"/>
</dbReference>
<organism>
    <name type="scientific">Gibberella zeae (strain ATCC MYA-4620 / CBS 123657 / FGSC 9075 / NRRL 31084 / PH-1)</name>
    <name type="common">Wheat head blight fungus</name>
    <name type="synonym">Fusarium graminearum</name>
    <dbReference type="NCBI Taxonomy" id="229533"/>
    <lineage>
        <taxon>Eukaryota</taxon>
        <taxon>Fungi</taxon>
        <taxon>Dikarya</taxon>
        <taxon>Ascomycota</taxon>
        <taxon>Pezizomycotina</taxon>
        <taxon>Sordariomycetes</taxon>
        <taxon>Hypocreomycetidae</taxon>
        <taxon>Hypocreales</taxon>
        <taxon>Nectriaceae</taxon>
        <taxon>Fusarium</taxon>
    </lineage>
</organism>
<keyword id="KW-0444">Lipid biosynthesis</keyword>
<keyword id="KW-0443">Lipid metabolism</keyword>
<keyword id="KW-1185">Reference proteome</keyword>
<keyword id="KW-0752">Steroid biosynthesis</keyword>
<keyword id="KW-0753">Steroid metabolism</keyword>
<keyword id="KW-0756">Sterol biosynthesis</keyword>
<keyword id="KW-1207">Sterol metabolism</keyword>
<keyword id="KW-0808">Transferase</keyword>
<protein>
    <recommendedName>
        <fullName evidence="5">Hydroxymethylglutaryl-CoA synthase ERG13</fullName>
        <shortName evidence="5">HMG-CoA synthase</shortName>
        <ecNumber evidence="7">2.3.3.10</ecNumber>
    </recommendedName>
    <alternativeName>
        <fullName evidence="6">3-hydroxy-3-methylglutaryl coenzyme A synthase ERG13</fullName>
    </alternativeName>
    <alternativeName>
        <fullName evidence="5">Ergosterol biosynthesis protein 13</fullName>
    </alternativeName>
</protein>
<accession>I1RY35</accession>
<accession>A0A098DM80</accession>
<proteinExistence type="evidence at transcript level"/>
<gene>
    <name evidence="5" type="primary">RGE13</name>
    <name type="ORF">FG09266</name>
    <name type="ORF">FGRAMPH1_01T27519</name>
</gene>
<evidence type="ECO:0000250" key="1">
    <source>
        <dbReference type="UniProtKB" id="P41338"/>
    </source>
</evidence>
<evidence type="ECO:0000250" key="2">
    <source>
        <dbReference type="UniProtKB" id="P54868"/>
    </source>
</evidence>
<evidence type="ECO:0000255" key="3">
    <source>
        <dbReference type="PROSITE-ProRule" id="PRU10116"/>
    </source>
</evidence>
<evidence type="ECO:0000269" key="4">
    <source>
    </source>
</evidence>
<evidence type="ECO:0000303" key="5">
    <source>
    </source>
</evidence>
<evidence type="ECO:0000305" key="6"/>
<evidence type="ECO:0000305" key="7">
    <source>
    </source>
</evidence>
<name>ERG13_GIBZE</name>
<comment type="function">
    <text evidence="1 7">Hydroxymethylglutaryl-CoA synthase; part of the first module of ergosterol biosynthesis pathway that includes the early steps of the pathway, conserved across all eukaryotes, and which results in the formation of mevalonate from acetyl-coenzyme A (acetyl-CoA) (By similarity). ERG13 condenses acetyl-CoA with acetoacetyl-CoA to form hydroxymethylglutaryl-CoA (HMG-CoA) (By similarity). The first module starts with the action of the cytosolic acetyl-CoA acetyltransferase ERG10B that catalyzes the formation of acetoacetyl-CoA. The hydroxymethylglutaryl-CoA synthases ERG13 then condenses acetyl-CoA with acetoacetyl-CoA to form HMG-CoA. The rate-limiting step of the early module is the reduction to mevalonate by the 3-hydroxy-3-methylglutaryl-coenzyme A (HMG-CoA) reductases HMG1 (Probable).</text>
</comment>
<comment type="catalytic activity">
    <reaction evidence="3 7">
        <text>acetoacetyl-CoA + acetyl-CoA + H2O = (3S)-3-hydroxy-3-methylglutaryl-CoA + CoA + H(+)</text>
        <dbReference type="Rhea" id="RHEA:10188"/>
        <dbReference type="ChEBI" id="CHEBI:15377"/>
        <dbReference type="ChEBI" id="CHEBI:15378"/>
        <dbReference type="ChEBI" id="CHEBI:43074"/>
        <dbReference type="ChEBI" id="CHEBI:57286"/>
        <dbReference type="ChEBI" id="CHEBI:57287"/>
        <dbReference type="ChEBI" id="CHEBI:57288"/>
        <dbReference type="EC" id="2.3.3.10"/>
    </reaction>
    <physiologicalReaction direction="left-to-right" evidence="1">
        <dbReference type="Rhea" id="RHEA:10189"/>
    </physiologicalReaction>
</comment>
<comment type="pathway">
    <text evidence="7">Metabolic intermediate biosynthesis; (R)-mevalonate biosynthesis; (R)-mevalonate from acetyl-CoA: step 2/3.</text>
</comment>
<comment type="induction">
    <text evidence="4">Expression is regulated by the Zn(2)-C6 fungal-type transcription factor FgSR which binds directly to the promoter.</text>
</comment>
<comment type="similarity">
    <text evidence="6">Belongs to the thiolase-like superfamily. HMG-CoA synthase family.</text>
</comment>
<sequence>MSSRPQNIGIKAIELYFPSQYVDQVELEKFDGVSAGKYTIGLGQTKMSFCDDREDIYSFALTATSKLLKNYNIDPNSIGFLEVGTETLLDKSKSVKSVLMQLFGDNTNIEGVDTINACYGGTNAVFNAINWVESSAWDGRDAIVVAGDIALYAKGNARPTGGAGAVALLIGPNAPIVAEPGLRGTYMQHAYDFYKPDLTSEYPYVDGHYSVNCYSKALDAAYRAYCKREAKQANGTNGVTNGDASTKTGLDRFDYMAFHSPTCKLVQKSYARLLYHDYLANADSPVFAEVAPELRDMDYEKSLTDKVVEKTFMTLTKKRFQERVNPAIQVATNCGNMYCGSVWSGLASLISVVDNKDLEGKRIGLFSYGSGLAASFLSFRINGSVDKISDVLNIPSRLESRRAVPPETYDQMCDLRKQAHLQKDYTPKGDPSTILPGTYYLTKVDDMFKREYAIKE</sequence>
<reference key="1">
    <citation type="journal article" date="2007" name="Science">
        <title>The Fusarium graminearum genome reveals a link between localized polymorphism and pathogen specialization.</title>
        <authorList>
            <person name="Cuomo C.A."/>
            <person name="Gueldener U."/>
            <person name="Xu J.-R."/>
            <person name="Trail F."/>
            <person name="Turgeon B.G."/>
            <person name="Di Pietro A."/>
            <person name="Walton J.D."/>
            <person name="Ma L.-J."/>
            <person name="Baker S.E."/>
            <person name="Rep M."/>
            <person name="Adam G."/>
            <person name="Antoniw J."/>
            <person name="Baldwin T."/>
            <person name="Calvo S.E."/>
            <person name="Chang Y.-L."/>
            <person name="DeCaprio D."/>
            <person name="Gale L.R."/>
            <person name="Gnerre S."/>
            <person name="Goswami R.S."/>
            <person name="Hammond-Kosack K."/>
            <person name="Harris L.J."/>
            <person name="Hilburn K."/>
            <person name="Kennell J.C."/>
            <person name="Kroken S."/>
            <person name="Magnuson J.K."/>
            <person name="Mannhaupt G."/>
            <person name="Mauceli E.W."/>
            <person name="Mewes H.-W."/>
            <person name="Mitterbauer R."/>
            <person name="Muehlbauer G."/>
            <person name="Muensterkoetter M."/>
            <person name="Nelson D."/>
            <person name="O'Donnell K."/>
            <person name="Ouellet T."/>
            <person name="Qi W."/>
            <person name="Quesneville H."/>
            <person name="Roncero M.I.G."/>
            <person name="Seong K.-Y."/>
            <person name="Tetko I.V."/>
            <person name="Urban M."/>
            <person name="Waalwijk C."/>
            <person name="Ward T.J."/>
            <person name="Yao J."/>
            <person name="Birren B.W."/>
            <person name="Kistler H.C."/>
        </authorList>
    </citation>
    <scope>NUCLEOTIDE SEQUENCE [LARGE SCALE GENOMIC DNA]</scope>
    <source>
        <strain>ATCC MYA-4620 / CBS 123657 / FGSC 9075 / NRRL 31084 / PH-1</strain>
    </source>
</reference>
<reference key="2">
    <citation type="journal article" date="2010" name="Nature">
        <title>Comparative genomics reveals mobile pathogenicity chromosomes in Fusarium.</title>
        <authorList>
            <person name="Ma L.-J."/>
            <person name="van der Does H.C."/>
            <person name="Borkovich K.A."/>
            <person name="Coleman J.J."/>
            <person name="Daboussi M.-J."/>
            <person name="Di Pietro A."/>
            <person name="Dufresne M."/>
            <person name="Freitag M."/>
            <person name="Grabherr M."/>
            <person name="Henrissat B."/>
            <person name="Houterman P.M."/>
            <person name="Kang S."/>
            <person name="Shim W.-B."/>
            <person name="Woloshuk C."/>
            <person name="Xie X."/>
            <person name="Xu J.-R."/>
            <person name="Antoniw J."/>
            <person name="Baker S.E."/>
            <person name="Bluhm B.H."/>
            <person name="Breakspear A."/>
            <person name="Brown D.W."/>
            <person name="Butchko R.A.E."/>
            <person name="Chapman S."/>
            <person name="Coulson R."/>
            <person name="Coutinho P.M."/>
            <person name="Danchin E.G.J."/>
            <person name="Diener A."/>
            <person name="Gale L.R."/>
            <person name="Gardiner D.M."/>
            <person name="Goff S."/>
            <person name="Hammond-Kosack K.E."/>
            <person name="Hilburn K."/>
            <person name="Hua-Van A."/>
            <person name="Jonkers W."/>
            <person name="Kazan K."/>
            <person name="Kodira C.D."/>
            <person name="Koehrsen M."/>
            <person name="Kumar L."/>
            <person name="Lee Y.-H."/>
            <person name="Li L."/>
            <person name="Manners J.M."/>
            <person name="Miranda-Saavedra D."/>
            <person name="Mukherjee M."/>
            <person name="Park G."/>
            <person name="Park J."/>
            <person name="Park S.-Y."/>
            <person name="Proctor R.H."/>
            <person name="Regev A."/>
            <person name="Ruiz-Roldan M.C."/>
            <person name="Sain D."/>
            <person name="Sakthikumar S."/>
            <person name="Sykes S."/>
            <person name="Schwartz D.C."/>
            <person name="Turgeon B.G."/>
            <person name="Wapinski I."/>
            <person name="Yoder O."/>
            <person name="Young S."/>
            <person name="Zeng Q."/>
            <person name="Zhou S."/>
            <person name="Galagan J."/>
            <person name="Cuomo C.A."/>
            <person name="Kistler H.C."/>
            <person name="Rep M."/>
        </authorList>
    </citation>
    <scope>GENOME REANNOTATION</scope>
    <source>
        <strain>ATCC MYA-4620 / CBS 123657 / FGSC 9075 / NRRL 31084 / PH-1</strain>
    </source>
</reference>
<reference key="3">
    <citation type="journal article" date="2015" name="BMC Genomics">
        <title>The completed genome sequence of the pathogenic ascomycete fungus Fusarium graminearum.</title>
        <authorList>
            <person name="King R."/>
            <person name="Urban M."/>
            <person name="Hammond-Kosack M.C.U."/>
            <person name="Hassani-Pak K."/>
            <person name="Hammond-Kosack K.E."/>
        </authorList>
    </citation>
    <scope>NUCLEOTIDE SEQUENCE [LARGE SCALE GENOMIC DNA]</scope>
    <source>
        <strain>ATCC MYA-4620 / CBS 123657 / FGSC 9075 / NRRL 31084 / PH-1</strain>
    </source>
</reference>
<reference key="4">
    <citation type="journal article" date="2019" name="Nat. Commun.">
        <title>A phosphorylated transcription factor regulates sterol biosynthesis in Fusarium graminearum.</title>
        <authorList>
            <person name="Liu Z."/>
            <person name="Jian Y."/>
            <person name="Chen Y."/>
            <person name="Kistler H.C."/>
            <person name="He P."/>
            <person name="Ma Z."/>
            <person name="Yin Y."/>
        </authorList>
    </citation>
    <scope>FUNCTION</scope>
    <scope>INDUCTION</scope>
</reference>